<organism>
    <name type="scientific">Enterobacter sp. (strain 638)</name>
    <dbReference type="NCBI Taxonomy" id="399742"/>
    <lineage>
        <taxon>Bacteria</taxon>
        <taxon>Pseudomonadati</taxon>
        <taxon>Pseudomonadota</taxon>
        <taxon>Gammaproteobacteria</taxon>
        <taxon>Enterobacterales</taxon>
        <taxon>Enterobacteriaceae</taxon>
        <taxon>Enterobacter</taxon>
    </lineage>
</organism>
<name>BTUB_ENT38</name>
<dbReference type="EMBL" id="CP000653">
    <property type="protein sequence ID" value="ABP62675.1"/>
    <property type="status" value="ALT_INIT"/>
    <property type="molecule type" value="Genomic_DNA"/>
</dbReference>
<dbReference type="RefSeq" id="WP_015960979.1">
    <property type="nucleotide sequence ID" value="NC_009436.1"/>
</dbReference>
<dbReference type="SMR" id="A4WG45"/>
<dbReference type="STRING" id="399742.Ent638_4020"/>
<dbReference type="KEGG" id="ent:Ent638_4020"/>
<dbReference type="eggNOG" id="COG4206">
    <property type="taxonomic scope" value="Bacteria"/>
</dbReference>
<dbReference type="HOGENOM" id="CLU_008287_18_5_6"/>
<dbReference type="OrthoDB" id="9764669at2"/>
<dbReference type="Proteomes" id="UP000000230">
    <property type="component" value="Chromosome"/>
</dbReference>
<dbReference type="GO" id="GO:0009279">
    <property type="term" value="C:cell outer membrane"/>
    <property type="evidence" value="ECO:0007669"/>
    <property type="project" value="UniProtKB-SubCell"/>
</dbReference>
<dbReference type="GO" id="GO:0046930">
    <property type="term" value="C:pore complex"/>
    <property type="evidence" value="ECO:0007669"/>
    <property type="project" value="UniProtKB-KW"/>
</dbReference>
<dbReference type="GO" id="GO:0015420">
    <property type="term" value="F:ABC-type vitamin B12 transporter activity"/>
    <property type="evidence" value="ECO:0007669"/>
    <property type="project" value="InterPro"/>
</dbReference>
<dbReference type="GO" id="GO:0046872">
    <property type="term" value="F:metal ion binding"/>
    <property type="evidence" value="ECO:0007669"/>
    <property type="project" value="UniProtKB-KW"/>
</dbReference>
<dbReference type="GO" id="GO:0015288">
    <property type="term" value="F:porin activity"/>
    <property type="evidence" value="ECO:0007669"/>
    <property type="project" value="UniProtKB-KW"/>
</dbReference>
<dbReference type="GO" id="GO:0006811">
    <property type="term" value="P:monoatomic ion transport"/>
    <property type="evidence" value="ECO:0007669"/>
    <property type="project" value="UniProtKB-KW"/>
</dbReference>
<dbReference type="CDD" id="cd01347">
    <property type="entry name" value="ligand_gated_channel"/>
    <property type="match status" value="1"/>
</dbReference>
<dbReference type="FunFam" id="2.170.130.10:FF:000002">
    <property type="entry name" value="Vitamin B12 transporter BtuB"/>
    <property type="match status" value="1"/>
</dbReference>
<dbReference type="FunFam" id="2.40.170.20:FF:000001">
    <property type="entry name" value="Vitamin B12 transporter BtuB"/>
    <property type="match status" value="1"/>
</dbReference>
<dbReference type="Gene3D" id="2.40.170.20">
    <property type="entry name" value="TonB-dependent receptor, beta-barrel domain"/>
    <property type="match status" value="1"/>
</dbReference>
<dbReference type="Gene3D" id="2.170.130.10">
    <property type="entry name" value="TonB-dependent receptor, plug domain"/>
    <property type="match status" value="1"/>
</dbReference>
<dbReference type="HAMAP" id="MF_01531">
    <property type="entry name" value="BtuB"/>
    <property type="match status" value="1"/>
</dbReference>
<dbReference type="InterPro" id="IPR010101">
    <property type="entry name" value="B12_transptr_BtuB"/>
</dbReference>
<dbReference type="InterPro" id="IPR012910">
    <property type="entry name" value="Plug_dom"/>
</dbReference>
<dbReference type="InterPro" id="IPR037066">
    <property type="entry name" value="Plug_dom_sf"/>
</dbReference>
<dbReference type="InterPro" id="IPR039426">
    <property type="entry name" value="TonB-dep_rcpt-like"/>
</dbReference>
<dbReference type="InterPro" id="IPR000531">
    <property type="entry name" value="TonB-dep_rcpt_b-brl"/>
</dbReference>
<dbReference type="InterPro" id="IPR010916">
    <property type="entry name" value="TonB_box_CS"/>
</dbReference>
<dbReference type="InterPro" id="IPR036942">
    <property type="entry name" value="TonB_rcpt_b-brl_sf"/>
</dbReference>
<dbReference type="InterPro" id="IPR010917">
    <property type="entry name" value="TonB_rcpt_CS"/>
</dbReference>
<dbReference type="NCBIfam" id="NF007926">
    <property type="entry name" value="PRK10641.1"/>
    <property type="match status" value="1"/>
</dbReference>
<dbReference type="NCBIfam" id="TIGR01779">
    <property type="entry name" value="TonB-B12"/>
    <property type="match status" value="1"/>
</dbReference>
<dbReference type="PANTHER" id="PTHR30069:SF53">
    <property type="entry name" value="COLICIN I RECEPTOR-RELATED"/>
    <property type="match status" value="1"/>
</dbReference>
<dbReference type="PANTHER" id="PTHR30069">
    <property type="entry name" value="TONB-DEPENDENT OUTER MEMBRANE RECEPTOR"/>
    <property type="match status" value="1"/>
</dbReference>
<dbReference type="Pfam" id="PF07715">
    <property type="entry name" value="Plug"/>
    <property type="match status" value="1"/>
</dbReference>
<dbReference type="Pfam" id="PF00593">
    <property type="entry name" value="TonB_dep_Rec_b-barrel"/>
    <property type="match status" value="1"/>
</dbReference>
<dbReference type="SUPFAM" id="SSF56935">
    <property type="entry name" value="Porins"/>
    <property type="match status" value="1"/>
</dbReference>
<dbReference type="PROSITE" id="PS00430">
    <property type="entry name" value="TONB_DEPENDENT_REC_1"/>
    <property type="match status" value="1"/>
</dbReference>
<dbReference type="PROSITE" id="PS01156">
    <property type="entry name" value="TONB_DEPENDENT_REC_2"/>
    <property type="match status" value="1"/>
</dbReference>
<dbReference type="PROSITE" id="PS52016">
    <property type="entry name" value="TONB_DEPENDENT_REC_3"/>
    <property type="match status" value="1"/>
</dbReference>
<proteinExistence type="inferred from homology"/>
<accession>A4WG45</accession>
<protein>
    <recommendedName>
        <fullName evidence="1">Vitamin B12 transporter BtuB</fullName>
    </recommendedName>
    <alternativeName>
        <fullName evidence="1">Cobalamin receptor</fullName>
    </alternativeName>
    <alternativeName>
        <fullName evidence="1">Outer membrane cobalamin translocator</fullName>
    </alternativeName>
</protein>
<sequence>MIKKVSLMTALSVTAFSGWAQDSADSLVVTANRFEQPANTVLAPTSVVTREDIERWQSTTVLDVMRRLPGVDTAQNGGMGQASSLFVRGTNSSHVLILVDGIRLNQAGVTGSSDLSQFPISLVQRIEYIRGPRSAVYGSDAIGGVVNIITTRAKDGTTLNAGVGSHGYQNYGGSTQQTLGDNTRVTLAGDYTYTKGFDVVADGNNGGLAQTDRDGYMNKTIYGALEHAFSDQWSGFVRGFGYSNRTAYDAYYSSFTPDVLVDTRQLYSQTWDTGLRFNDGIFHSQLLSSYSHSKDYNYDPHLGRYDSTATLDEIKQYNVQWTNSVDVGHGNVGAGVDWQKQSTEPGTNYVTNDTNLRNTGVYLTALQKFGDFTLEGAARSDDNSQFGRHGTWQSSAAWEFIEGYRFIASYGTAYKAPNLGQLYGFYGNDHLNPEESKQWEGAFEGLTAGVSWRVSAYRNDVDNLIDFDSNLQQYYNVGKARIKGVEATASFDTGPLTHTVGYDYVDARNAATNELLDRRAKQQVKYQLDTQVYDFDWSLTYHYLGTRYDTDFGSYPYQKVKMGGVSLWDLAVSYPVTSHLTVRGKIANLFDKDYETVYGYETAGREYTLSGSYTF</sequence>
<keyword id="KW-0106">Calcium</keyword>
<keyword id="KW-0998">Cell outer membrane</keyword>
<keyword id="KW-0406">Ion transport</keyword>
<keyword id="KW-0472">Membrane</keyword>
<keyword id="KW-0479">Metal-binding</keyword>
<keyword id="KW-0626">Porin</keyword>
<keyword id="KW-0732">Signal</keyword>
<keyword id="KW-0798">TonB box</keyword>
<keyword id="KW-0812">Transmembrane</keyword>
<keyword id="KW-1134">Transmembrane beta strand</keyword>
<keyword id="KW-0813">Transport</keyword>
<evidence type="ECO:0000255" key="1">
    <source>
        <dbReference type="HAMAP-Rule" id="MF_01531"/>
    </source>
</evidence>
<evidence type="ECO:0000255" key="2">
    <source>
        <dbReference type="PROSITE-ProRule" id="PRU01360"/>
    </source>
</evidence>
<evidence type="ECO:0000305" key="3"/>
<reference key="1">
    <citation type="journal article" date="2010" name="PLoS Genet.">
        <title>Genome sequence of the plant growth promoting endophytic bacterium Enterobacter sp. 638.</title>
        <authorList>
            <person name="Taghavi S."/>
            <person name="van der Lelie D."/>
            <person name="Hoffman A."/>
            <person name="Zhang Y.B."/>
            <person name="Walla M.D."/>
            <person name="Vangronsveld J."/>
            <person name="Newman L."/>
            <person name="Monchy S."/>
        </authorList>
    </citation>
    <scope>NUCLEOTIDE SEQUENCE [LARGE SCALE GENOMIC DNA]</scope>
    <source>
        <strain>638</strain>
    </source>
</reference>
<feature type="signal peptide" evidence="1">
    <location>
        <begin position="1"/>
        <end position="20"/>
    </location>
</feature>
<feature type="chain" id="PRO_0000316877" description="Vitamin B12 transporter BtuB">
    <location>
        <begin position="21"/>
        <end position="615"/>
    </location>
</feature>
<feature type="transmembrane region" description="Beta stranded" evidence="1">
    <location>
        <begin position="157"/>
        <end position="164"/>
    </location>
</feature>
<feature type="transmembrane region" description="Beta stranded" evidence="1">
    <location>
        <begin position="168"/>
        <end position="177"/>
    </location>
</feature>
<feature type="transmembrane region" description="Beta stranded" evidence="1">
    <location>
        <begin position="183"/>
        <end position="194"/>
    </location>
</feature>
<feature type="transmembrane region" description="Beta stranded" evidence="1">
    <location>
        <begin position="216"/>
        <end position="226"/>
    </location>
</feature>
<feature type="transmembrane region" description="Beta stranded" evidence="1">
    <location>
        <begin position="231"/>
        <end position="247"/>
    </location>
</feature>
<feature type="transmembrane region" description="Beta stranded" evidence="1">
    <location>
        <begin position="264"/>
        <end position="278"/>
    </location>
</feature>
<feature type="transmembrane region" description="Beta stranded" evidence="1">
    <location>
        <begin position="280"/>
        <end position="297"/>
    </location>
</feature>
<feature type="transmembrane region" description="Beta stranded" evidence="1">
    <location>
        <begin position="310"/>
        <end position="326"/>
    </location>
</feature>
<feature type="transmembrane region" description="Beta stranded" evidence="1">
    <location>
        <begin position="329"/>
        <end position="338"/>
    </location>
</feature>
<feature type="transmembrane region" description="Beta stranded" evidence="1">
    <location>
        <begin position="354"/>
        <end position="370"/>
    </location>
</feature>
<feature type="transmembrane region" description="Beta stranded" evidence="1">
    <location>
        <begin position="372"/>
        <end position="382"/>
    </location>
</feature>
<feature type="transmembrane region" description="Beta stranded" evidence="1">
    <location>
        <begin position="386"/>
        <end position="401"/>
    </location>
</feature>
<feature type="transmembrane region" description="Beta stranded" evidence="1">
    <location>
        <begin position="404"/>
        <end position="418"/>
    </location>
</feature>
<feature type="transmembrane region" description="Beta stranded" evidence="1">
    <location>
        <begin position="435"/>
        <end position="444"/>
    </location>
</feature>
<feature type="transmembrane region" description="Beta stranded" evidence="1">
    <location>
        <begin position="450"/>
        <end position="459"/>
    </location>
</feature>
<feature type="transmembrane region" description="Beta stranded" evidence="1">
    <location>
        <begin position="474"/>
        <end position="491"/>
    </location>
</feature>
<feature type="transmembrane region" description="Beta stranded" evidence="1">
    <location>
        <begin position="495"/>
        <end position="510"/>
    </location>
</feature>
<feature type="transmembrane region" description="Beta stranded" evidence="1">
    <location>
        <begin position="518"/>
        <end position="530"/>
    </location>
</feature>
<feature type="transmembrane region" description="Beta stranded" evidence="1">
    <location>
        <begin position="536"/>
        <end position="551"/>
    </location>
</feature>
<feature type="transmembrane region" description="Beta stranded" evidence="1">
    <location>
        <begin position="559"/>
        <end position="573"/>
    </location>
</feature>
<feature type="transmembrane region" description="Beta stranded" evidence="1">
    <location>
        <begin position="586"/>
        <end position="597"/>
    </location>
</feature>
<feature type="transmembrane region" description="Beta stranded" evidence="1">
    <location>
        <begin position="603"/>
        <end position="615"/>
    </location>
</feature>
<feature type="domain" description="TBDR plug" evidence="2">
    <location>
        <begin position="37"/>
        <end position="151"/>
    </location>
</feature>
<feature type="domain" description="TBDR beta-barrel" evidence="2">
    <location>
        <begin position="154"/>
        <end position="615"/>
    </location>
</feature>
<feature type="short sequence motif" description="TonB box">
    <location>
        <begin position="25"/>
        <end position="32"/>
    </location>
</feature>
<feature type="short sequence motif" description="TonB C-terminal box">
    <location>
        <begin position="598"/>
        <end position="615"/>
    </location>
</feature>
<feature type="binding site" evidence="1">
    <location>
        <position position="84"/>
    </location>
    <ligand>
        <name>cyanocob(III)alamin</name>
        <dbReference type="ChEBI" id="CHEBI:17439"/>
    </ligand>
</feature>
<feature type="binding site" evidence="1">
    <location>
        <position position="91"/>
    </location>
    <ligand>
        <name>cyanocob(III)alamin</name>
        <dbReference type="ChEBI" id="CHEBI:17439"/>
    </ligand>
</feature>
<feature type="binding site" evidence="1">
    <location>
        <begin position="109"/>
        <end position="110"/>
    </location>
    <ligand>
        <name>cyanocob(III)alamin</name>
        <dbReference type="ChEBI" id="CHEBI:17439"/>
    </ligand>
</feature>
<feature type="binding site" evidence="1">
    <location>
        <position position="198"/>
    </location>
    <ligand>
        <name>Ca(2+)</name>
        <dbReference type="ChEBI" id="CHEBI:29108"/>
        <label>1</label>
    </ligand>
</feature>
<feature type="binding site" evidence="1">
    <location>
        <position position="210"/>
    </location>
    <ligand>
        <name>Ca(2+)</name>
        <dbReference type="ChEBI" id="CHEBI:29108"/>
        <label>1</label>
    </ligand>
</feature>
<feature type="binding site" evidence="1">
    <location>
        <position position="212"/>
    </location>
    <ligand>
        <name>Ca(2+)</name>
        <dbReference type="ChEBI" id="CHEBI:29108"/>
        <label>1</label>
    </ligand>
</feature>
<feature type="binding site" evidence="1">
    <location>
        <position position="212"/>
    </location>
    <ligand>
        <name>Ca(2+)</name>
        <dbReference type="ChEBI" id="CHEBI:29108"/>
        <label>2</label>
    </ligand>
</feature>
<feature type="binding site" evidence="1">
    <location>
        <position position="214"/>
    </location>
    <ligand>
        <name>Ca(2+)</name>
        <dbReference type="ChEBI" id="CHEBI:29108"/>
        <label>1</label>
    </ligand>
</feature>
<feature type="binding site" evidence="1">
    <location>
        <position position="214"/>
    </location>
    <ligand>
        <name>Ca(2+)</name>
        <dbReference type="ChEBI" id="CHEBI:29108"/>
        <label>2</label>
    </ligand>
</feature>
<feature type="binding site" evidence="1">
    <location>
        <position position="248"/>
    </location>
    <ligand>
        <name>Ca(2+)</name>
        <dbReference type="ChEBI" id="CHEBI:29108"/>
        <label>2</label>
    </ligand>
</feature>
<feature type="binding site" evidence="1">
    <location>
        <position position="249"/>
    </location>
    <ligand>
        <name>Ca(2+)</name>
        <dbReference type="ChEBI" id="CHEBI:29108"/>
        <label>1</label>
    </ligand>
</feature>
<feature type="binding site" evidence="1">
    <location>
        <position position="249"/>
    </location>
    <ligand>
        <name>Ca(2+)</name>
        <dbReference type="ChEBI" id="CHEBI:29108"/>
        <label>2</label>
    </ligand>
</feature>
<feature type="binding site" evidence="1">
    <location>
        <position position="250"/>
    </location>
    <ligand>
        <name>cyanocob(III)alamin</name>
        <dbReference type="ChEBI" id="CHEBI:17439"/>
    </ligand>
</feature>
<feature type="binding site" evidence="1">
    <location>
        <position position="262"/>
    </location>
    <ligand>
        <name>Ca(2+)</name>
        <dbReference type="ChEBI" id="CHEBI:29108"/>
        <label>2</label>
    </ligand>
</feature>
<feature type="binding site" evidence="1">
    <location>
        <position position="310"/>
    </location>
    <ligand>
        <name>cyanocob(III)alamin</name>
        <dbReference type="ChEBI" id="CHEBI:17439"/>
    </ligand>
</feature>
<feature type="binding site" evidence="1">
    <location>
        <position position="518"/>
    </location>
    <ligand>
        <name>cyanocob(III)alamin</name>
        <dbReference type="ChEBI" id="CHEBI:17439"/>
    </ligand>
</feature>
<comment type="function">
    <text evidence="1">Involved in the active translocation of vitamin B12 (cyanocobalamin) across the outer membrane to the periplasmic space. It derives its energy for transport by interacting with the trans-periplasmic membrane protein TonB.</text>
</comment>
<comment type="subcellular location">
    <subcellularLocation>
        <location evidence="1">Cell outer membrane</location>
        <topology evidence="1">Multi-pass membrane protein</topology>
    </subcellularLocation>
</comment>
<comment type="similarity">
    <text evidence="1">Belongs to the TonB-dependent receptor family. BtuB (TC 1.B.14.3.1) subfamily.</text>
</comment>
<comment type="sequence caution" evidence="3">
    <conflict type="erroneous initiation">
        <sequence resource="EMBL-CDS" id="ABP62675"/>
    </conflict>
</comment>
<gene>
    <name evidence="1" type="primary">btuB</name>
    <name type="ordered locus">Ent638_4020</name>
</gene>